<organism>
    <name type="scientific">Pseudomonas syringae pv. tomato (strain ATCC BAA-871 / DC3000)</name>
    <dbReference type="NCBI Taxonomy" id="223283"/>
    <lineage>
        <taxon>Bacteria</taxon>
        <taxon>Pseudomonadati</taxon>
        <taxon>Pseudomonadota</taxon>
        <taxon>Gammaproteobacteria</taxon>
        <taxon>Pseudomonadales</taxon>
        <taxon>Pseudomonadaceae</taxon>
        <taxon>Pseudomonas</taxon>
    </lineage>
</organism>
<comment type="function">
    <text evidence="1">Part of an ABC transporter complex involved in carbohydrate import. Could be involved in ribose, galactose and/or methyl galactoside import. Responsible for energy coupling to the transport system.</text>
</comment>
<comment type="catalytic activity">
    <reaction evidence="1">
        <text>D-ribose(out) + ATP + H2O = D-ribose(in) + ADP + phosphate + H(+)</text>
        <dbReference type="Rhea" id="RHEA:29903"/>
        <dbReference type="ChEBI" id="CHEBI:15377"/>
        <dbReference type="ChEBI" id="CHEBI:15378"/>
        <dbReference type="ChEBI" id="CHEBI:30616"/>
        <dbReference type="ChEBI" id="CHEBI:43474"/>
        <dbReference type="ChEBI" id="CHEBI:47013"/>
        <dbReference type="ChEBI" id="CHEBI:456216"/>
        <dbReference type="EC" id="7.5.2.7"/>
    </reaction>
</comment>
<comment type="catalytic activity">
    <reaction evidence="1">
        <text>D-galactose(out) + ATP + H2O = D-galactose(in) + ADP + phosphate + H(+)</text>
        <dbReference type="Rhea" id="RHEA:60156"/>
        <dbReference type="ChEBI" id="CHEBI:4139"/>
        <dbReference type="ChEBI" id="CHEBI:15377"/>
        <dbReference type="ChEBI" id="CHEBI:15378"/>
        <dbReference type="ChEBI" id="CHEBI:30616"/>
        <dbReference type="ChEBI" id="CHEBI:43474"/>
        <dbReference type="ChEBI" id="CHEBI:456216"/>
        <dbReference type="EC" id="7.5.2.11"/>
    </reaction>
</comment>
<comment type="subcellular location">
    <subcellularLocation>
        <location evidence="1">Cell inner membrane</location>
        <topology evidence="1">Peripheral membrane protein</topology>
    </subcellularLocation>
</comment>
<comment type="similarity">
    <text evidence="1">Belongs to the ABC transporter superfamily. Carbohydrate importer 2 (CUT2) (TC 3.A.1.2) family.</text>
</comment>
<dbReference type="EC" id="7.5.2.11" evidence="1"/>
<dbReference type="EC" id="7.5.2.7" evidence="1"/>
<dbReference type="EMBL" id="AE016853">
    <property type="protein sequence ID" value="AAO56964.1"/>
    <property type="molecule type" value="Genomic_DNA"/>
</dbReference>
<dbReference type="RefSeq" id="NP_793269.1">
    <property type="nucleotide sequence ID" value="NC_004578.1"/>
</dbReference>
<dbReference type="RefSeq" id="WP_011104585.1">
    <property type="nucleotide sequence ID" value="NC_004578.1"/>
</dbReference>
<dbReference type="SMR" id="Q87ZE0"/>
<dbReference type="STRING" id="223283.PSPTO_3489"/>
<dbReference type="GeneID" id="1185154"/>
<dbReference type="KEGG" id="pst:PSPTO_3489"/>
<dbReference type="PATRIC" id="fig|223283.9.peg.3572"/>
<dbReference type="eggNOG" id="COG1129">
    <property type="taxonomic scope" value="Bacteria"/>
</dbReference>
<dbReference type="HOGENOM" id="CLU_000604_92_3_6"/>
<dbReference type="OrthoDB" id="9776369at2"/>
<dbReference type="PhylomeDB" id="Q87ZE0"/>
<dbReference type="Proteomes" id="UP000002515">
    <property type="component" value="Chromosome"/>
</dbReference>
<dbReference type="GO" id="GO:0005886">
    <property type="term" value="C:plasma membrane"/>
    <property type="evidence" value="ECO:0007669"/>
    <property type="project" value="UniProtKB-SubCell"/>
</dbReference>
<dbReference type="GO" id="GO:0015611">
    <property type="term" value="F:ABC-type D-ribose transporter activity"/>
    <property type="evidence" value="ECO:0007669"/>
    <property type="project" value="UniProtKB-EC"/>
</dbReference>
<dbReference type="GO" id="GO:0005524">
    <property type="term" value="F:ATP binding"/>
    <property type="evidence" value="ECO:0007669"/>
    <property type="project" value="UniProtKB-KW"/>
</dbReference>
<dbReference type="GO" id="GO:0016887">
    <property type="term" value="F:ATP hydrolysis activity"/>
    <property type="evidence" value="ECO:0007669"/>
    <property type="project" value="InterPro"/>
</dbReference>
<dbReference type="CDD" id="cd03216">
    <property type="entry name" value="ABC_Carb_Monos_I"/>
    <property type="match status" value="1"/>
</dbReference>
<dbReference type="CDD" id="cd03215">
    <property type="entry name" value="ABC_Carb_Monos_II"/>
    <property type="match status" value="1"/>
</dbReference>
<dbReference type="FunFam" id="3.40.50.300:FF:000126">
    <property type="entry name" value="Galactose/methyl galactoside import ATP-binding protein MglA"/>
    <property type="match status" value="1"/>
</dbReference>
<dbReference type="FunFam" id="3.40.50.300:FF:000127">
    <property type="entry name" value="Ribose import ATP-binding protein RbsA"/>
    <property type="match status" value="1"/>
</dbReference>
<dbReference type="Gene3D" id="3.40.50.300">
    <property type="entry name" value="P-loop containing nucleotide triphosphate hydrolases"/>
    <property type="match status" value="2"/>
</dbReference>
<dbReference type="InterPro" id="IPR003593">
    <property type="entry name" value="AAA+_ATPase"/>
</dbReference>
<dbReference type="InterPro" id="IPR050107">
    <property type="entry name" value="ABC_carbohydrate_import_ATPase"/>
</dbReference>
<dbReference type="InterPro" id="IPR003439">
    <property type="entry name" value="ABC_transporter-like_ATP-bd"/>
</dbReference>
<dbReference type="InterPro" id="IPR017871">
    <property type="entry name" value="ABC_transporter-like_CS"/>
</dbReference>
<dbReference type="InterPro" id="IPR027417">
    <property type="entry name" value="P-loop_NTPase"/>
</dbReference>
<dbReference type="PANTHER" id="PTHR43790">
    <property type="entry name" value="CARBOHYDRATE TRANSPORT ATP-BINDING PROTEIN MG119-RELATED"/>
    <property type="match status" value="1"/>
</dbReference>
<dbReference type="PANTHER" id="PTHR43790:SF7">
    <property type="entry name" value="GALACTOSE_METHYL GALACTOSIDE IMPORT ATP-BINDING PROTEIN MGLA"/>
    <property type="match status" value="1"/>
</dbReference>
<dbReference type="Pfam" id="PF00005">
    <property type="entry name" value="ABC_tran"/>
    <property type="match status" value="2"/>
</dbReference>
<dbReference type="SMART" id="SM00382">
    <property type="entry name" value="AAA"/>
    <property type="match status" value="2"/>
</dbReference>
<dbReference type="SUPFAM" id="SSF52540">
    <property type="entry name" value="P-loop containing nucleoside triphosphate hydrolases"/>
    <property type="match status" value="2"/>
</dbReference>
<dbReference type="PROSITE" id="PS00211">
    <property type="entry name" value="ABC_TRANSPORTER_1"/>
    <property type="match status" value="1"/>
</dbReference>
<dbReference type="PROSITE" id="PS50893">
    <property type="entry name" value="ABC_TRANSPORTER_2"/>
    <property type="match status" value="2"/>
</dbReference>
<dbReference type="PROSITE" id="PS51260">
    <property type="entry name" value="MGLA"/>
    <property type="match status" value="1"/>
</dbReference>
<dbReference type="PROSITE" id="PS51254">
    <property type="entry name" value="RBSA"/>
    <property type="match status" value="1"/>
</dbReference>
<proteinExistence type="inferred from homology"/>
<sequence>MSGSATASPPAKPDLPSSDGAGLTPDAQCPYLLEISHISKGFPGVIALDDVQLRLRPGSVLALMGENGAGKSTLMKIIAGIYQPDTGEIRLRGKPISFTTPLSALQAGIAMIHQELNLMPFMSIAENIWIGREQLNGLHMVDHREMHRCTAQLLERLRIKLDPEELVGNLSIAERQMVEIAKAVSYDSDVLIMDEPTSAITETEVEHLFSIIADLRSQGKGIIYITHKMNEVFKIADEVAVFRDGTYIGLQRAESMDGDSLISMMVGRELTQLFPQREKPAGDVLLSVSDLSLKGIFQQVSFDLRAGEVLGIAGLMGSGRTNVAETLFGITPSDSGEIRFDGKTVRIGDPHQAIELGFALLTEDRKLTGLFPCLSVMENMEMAVLANYAGSGFVQQKALRALCEDMCKKLRVKTPSLEQCIDTLSGGNQQKALLARWLMTNPRVLILDEPTRGIDVGAKAEIYRLISLLASEGMAVIMISSELPEVLGMSDRVMVMHEGEMMGILDRSEATQEKVMHLASGHRVH</sequence>
<accession>Q87ZE0</accession>
<feature type="chain" id="PRO_0000262984" description="Putative ribose/galactose/methyl galactoside import ATP-binding protein">
    <location>
        <begin position="1"/>
        <end position="525"/>
    </location>
</feature>
<feature type="domain" description="ABC transporter 1" evidence="1">
    <location>
        <begin position="33"/>
        <end position="269"/>
    </location>
</feature>
<feature type="domain" description="ABC transporter 2" evidence="1">
    <location>
        <begin position="279"/>
        <end position="523"/>
    </location>
</feature>
<feature type="region of interest" description="Disordered" evidence="2">
    <location>
        <begin position="1"/>
        <end position="20"/>
    </location>
</feature>
<feature type="binding site" evidence="1">
    <location>
        <begin position="65"/>
        <end position="72"/>
    </location>
    <ligand>
        <name>ATP</name>
        <dbReference type="ChEBI" id="CHEBI:30616"/>
    </ligand>
</feature>
<gene>
    <name type="ordered locus">PSPTO_3489</name>
</gene>
<reference key="1">
    <citation type="journal article" date="2003" name="Proc. Natl. Acad. Sci. U.S.A.">
        <title>The complete genome sequence of the Arabidopsis and tomato pathogen Pseudomonas syringae pv. tomato DC3000.</title>
        <authorList>
            <person name="Buell C.R."/>
            <person name="Joardar V."/>
            <person name="Lindeberg M."/>
            <person name="Selengut J."/>
            <person name="Paulsen I.T."/>
            <person name="Gwinn M.L."/>
            <person name="Dodson R.J."/>
            <person name="DeBoy R.T."/>
            <person name="Durkin A.S."/>
            <person name="Kolonay J.F."/>
            <person name="Madupu R."/>
            <person name="Daugherty S.C."/>
            <person name="Brinkac L.M."/>
            <person name="Beanan M.J."/>
            <person name="Haft D.H."/>
            <person name="Nelson W.C."/>
            <person name="Davidsen T.M."/>
            <person name="Zafar N."/>
            <person name="Zhou L."/>
            <person name="Liu J."/>
            <person name="Yuan Q."/>
            <person name="Khouri H.M."/>
            <person name="Fedorova N.B."/>
            <person name="Tran B."/>
            <person name="Russell D."/>
            <person name="Berry K.J."/>
            <person name="Utterback T.R."/>
            <person name="Van Aken S.E."/>
            <person name="Feldblyum T.V."/>
            <person name="D'Ascenzo M."/>
            <person name="Deng W.-L."/>
            <person name="Ramos A.R."/>
            <person name="Alfano J.R."/>
            <person name="Cartinhour S."/>
            <person name="Chatterjee A.K."/>
            <person name="Delaney T.P."/>
            <person name="Lazarowitz S.G."/>
            <person name="Martin G.B."/>
            <person name="Schneider D.J."/>
            <person name="Tang X."/>
            <person name="Bender C.L."/>
            <person name="White O."/>
            <person name="Fraser C.M."/>
            <person name="Collmer A."/>
        </authorList>
    </citation>
    <scope>NUCLEOTIDE SEQUENCE [LARGE SCALE GENOMIC DNA]</scope>
    <source>
        <strain>ATCC BAA-871 / DC3000</strain>
    </source>
</reference>
<protein>
    <recommendedName>
        <fullName evidence="1">Putative ribose/galactose/methyl galactoside import ATP-binding protein</fullName>
        <ecNumber evidence="1">7.5.2.11</ecNumber>
        <ecNumber evidence="1">7.5.2.7</ecNumber>
    </recommendedName>
</protein>
<keyword id="KW-0067">ATP-binding</keyword>
<keyword id="KW-0997">Cell inner membrane</keyword>
<keyword id="KW-1003">Cell membrane</keyword>
<keyword id="KW-0472">Membrane</keyword>
<keyword id="KW-0547">Nucleotide-binding</keyword>
<keyword id="KW-1185">Reference proteome</keyword>
<keyword id="KW-0677">Repeat</keyword>
<keyword id="KW-0762">Sugar transport</keyword>
<keyword id="KW-1278">Translocase</keyword>
<keyword id="KW-0813">Transport</keyword>
<name>RGMG_PSESM</name>
<evidence type="ECO:0000255" key="1">
    <source>
        <dbReference type="HAMAP-Rule" id="MF_01717"/>
    </source>
</evidence>
<evidence type="ECO:0000256" key="2">
    <source>
        <dbReference type="SAM" id="MobiDB-lite"/>
    </source>
</evidence>